<organism>
    <name type="scientific">Wolbachia pipientis wMel</name>
    <dbReference type="NCBI Taxonomy" id="163164"/>
    <lineage>
        <taxon>Bacteria</taxon>
        <taxon>Pseudomonadati</taxon>
        <taxon>Pseudomonadota</taxon>
        <taxon>Alphaproteobacteria</taxon>
        <taxon>Rickettsiales</taxon>
        <taxon>Anaplasmataceae</taxon>
        <taxon>Wolbachieae</taxon>
        <taxon>Wolbachia</taxon>
    </lineage>
</organism>
<comment type="function">
    <text evidence="1">This is one of the proteins that bind and probably mediate the attachment of the 5S RNA into the large ribosomal subunit, where it forms part of the central protuberance. In the 70S ribosome it contacts protein S13 of the 30S subunit (bridge B1b), connecting the 2 subunits; this bridge is implicated in subunit movement. Contacts the P site tRNA; the 5S rRNA and some of its associated proteins might help stabilize positioning of ribosome-bound tRNAs.</text>
</comment>
<comment type="subunit">
    <text evidence="1">Part of the 50S ribosomal subunit; part of the 5S rRNA/L5/L18/L25 subcomplex. Contacts the 5S rRNA and the P site tRNA. Forms a bridge to the 30S subunit in the 70S ribosome.</text>
</comment>
<comment type="similarity">
    <text evidence="1">Belongs to the universal ribosomal protein uL5 family.</text>
</comment>
<gene>
    <name evidence="1" type="primary">rplE</name>
    <name type="ordered locus">WD_0669</name>
</gene>
<sequence length="177" mass="20085">MFKELYKDSIVKSLKDKFNYGNIMQVPKLVKVCINMGVGDAATDSKAINEPLDSLYLIAGQKPLSTFAKKSISGFKIRKGATVGCKVTLRRDKMYEFLERLIYIALPREKDFRGFSVKQFDGNGNFSFGIKEHISFLEIDYDKISKIRGMDINIITSAVSDKEAKELLLALKFPFFD</sequence>
<dbReference type="EMBL" id="AE017196">
    <property type="protein sequence ID" value="AAS14367.1"/>
    <property type="molecule type" value="Genomic_DNA"/>
</dbReference>
<dbReference type="RefSeq" id="WP_010962750.1">
    <property type="nucleotide sequence ID" value="NZ_OX384529.1"/>
</dbReference>
<dbReference type="SMR" id="Q73H98"/>
<dbReference type="EnsemblBacteria" id="AAS14367">
    <property type="protein sequence ID" value="AAS14367"/>
    <property type="gene ID" value="WD_0669"/>
</dbReference>
<dbReference type="GeneID" id="70036152"/>
<dbReference type="KEGG" id="wol:WD_0669"/>
<dbReference type="eggNOG" id="COG0094">
    <property type="taxonomic scope" value="Bacteria"/>
</dbReference>
<dbReference type="Proteomes" id="UP000008215">
    <property type="component" value="Chromosome"/>
</dbReference>
<dbReference type="GO" id="GO:1990904">
    <property type="term" value="C:ribonucleoprotein complex"/>
    <property type="evidence" value="ECO:0007669"/>
    <property type="project" value="UniProtKB-KW"/>
</dbReference>
<dbReference type="GO" id="GO:0005840">
    <property type="term" value="C:ribosome"/>
    <property type="evidence" value="ECO:0007669"/>
    <property type="project" value="UniProtKB-KW"/>
</dbReference>
<dbReference type="GO" id="GO:0019843">
    <property type="term" value="F:rRNA binding"/>
    <property type="evidence" value="ECO:0007669"/>
    <property type="project" value="UniProtKB-UniRule"/>
</dbReference>
<dbReference type="GO" id="GO:0003735">
    <property type="term" value="F:structural constituent of ribosome"/>
    <property type="evidence" value="ECO:0007669"/>
    <property type="project" value="InterPro"/>
</dbReference>
<dbReference type="GO" id="GO:0000049">
    <property type="term" value="F:tRNA binding"/>
    <property type="evidence" value="ECO:0007669"/>
    <property type="project" value="UniProtKB-UniRule"/>
</dbReference>
<dbReference type="GO" id="GO:0006412">
    <property type="term" value="P:translation"/>
    <property type="evidence" value="ECO:0007669"/>
    <property type="project" value="UniProtKB-UniRule"/>
</dbReference>
<dbReference type="FunFam" id="3.30.1440.10:FF:000001">
    <property type="entry name" value="50S ribosomal protein L5"/>
    <property type="match status" value="1"/>
</dbReference>
<dbReference type="Gene3D" id="3.30.1440.10">
    <property type="match status" value="1"/>
</dbReference>
<dbReference type="HAMAP" id="MF_01333_B">
    <property type="entry name" value="Ribosomal_uL5_B"/>
    <property type="match status" value="1"/>
</dbReference>
<dbReference type="InterPro" id="IPR002132">
    <property type="entry name" value="Ribosomal_uL5"/>
</dbReference>
<dbReference type="InterPro" id="IPR020930">
    <property type="entry name" value="Ribosomal_uL5_bac-type"/>
</dbReference>
<dbReference type="InterPro" id="IPR031309">
    <property type="entry name" value="Ribosomal_uL5_C"/>
</dbReference>
<dbReference type="InterPro" id="IPR020929">
    <property type="entry name" value="Ribosomal_uL5_CS"/>
</dbReference>
<dbReference type="InterPro" id="IPR022803">
    <property type="entry name" value="Ribosomal_uL5_dom_sf"/>
</dbReference>
<dbReference type="InterPro" id="IPR031310">
    <property type="entry name" value="Ribosomal_uL5_N"/>
</dbReference>
<dbReference type="NCBIfam" id="NF000585">
    <property type="entry name" value="PRK00010.1"/>
    <property type="match status" value="1"/>
</dbReference>
<dbReference type="PANTHER" id="PTHR11994">
    <property type="entry name" value="60S RIBOSOMAL PROTEIN L11-RELATED"/>
    <property type="match status" value="1"/>
</dbReference>
<dbReference type="Pfam" id="PF00281">
    <property type="entry name" value="Ribosomal_L5"/>
    <property type="match status" value="1"/>
</dbReference>
<dbReference type="Pfam" id="PF00673">
    <property type="entry name" value="Ribosomal_L5_C"/>
    <property type="match status" value="1"/>
</dbReference>
<dbReference type="PIRSF" id="PIRSF002161">
    <property type="entry name" value="Ribosomal_L5"/>
    <property type="match status" value="1"/>
</dbReference>
<dbReference type="SUPFAM" id="SSF55282">
    <property type="entry name" value="RL5-like"/>
    <property type="match status" value="1"/>
</dbReference>
<dbReference type="PROSITE" id="PS00358">
    <property type="entry name" value="RIBOSOMAL_L5"/>
    <property type="match status" value="1"/>
</dbReference>
<name>RL5_WOLPM</name>
<feature type="chain" id="PRO_0000125027" description="Large ribosomal subunit protein uL5">
    <location>
        <begin position="1"/>
        <end position="177"/>
    </location>
</feature>
<accession>Q73H98</accession>
<evidence type="ECO:0000255" key="1">
    <source>
        <dbReference type="HAMAP-Rule" id="MF_01333"/>
    </source>
</evidence>
<evidence type="ECO:0000305" key="2"/>
<protein>
    <recommendedName>
        <fullName evidence="1">Large ribosomal subunit protein uL5</fullName>
    </recommendedName>
    <alternativeName>
        <fullName evidence="2">50S ribosomal protein L5</fullName>
    </alternativeName>
</protein>
<reference key="1">
    <citation type="journal article" date="2004" name="PLoS Biol.">
        <title>Phylogenomics of the reproductive parasite Wolbachia pipientis wMel: a streamlined genome overrun by mobile genetic elements.</title>
        <authorList>
            <person name="Wu M."/>
            <person name="Sun L.V."/>
            <person name="Vamathevan J.J."/>
            <person name="Riegler M."/>
            <person name="DeBoy R.T."/>
            <person name="Brownlie J.C."/>
            <person name="McGraw E.A."/>
            <person name="Martin W."/>
            <person name="Esser C."/>
            <person name="Ahmadinejad N."/>
            <person name="Wiegand C."/>
            <person name="Madupu R."/>
            <person name="Beanan M.J."/>
            <person name="Brinkac L.M."/>
            <person name="Daugherty S.C."/>
            <person name="Durkin A.S."/>
            <person name="Kolonay J.F."/>
            <person name="Nelson W.C."/>
            <person name="Mohamoud Y."/>
            <person name="Lee P."/>
            <person name="Berry K.J."/>
            <person name="Young M.B."/>
            <person name="Utterback T.R."/>
            <person name="Weidman J.F."/>
            <person name="Nierman W.C."/>
            <person name="Paulsen I.T."/>
            <person name="Nelson K.E."/>
            <person name="Tettelin H."/>
            <person name="O'Neill S.L."/>
            <person name="Eisen J.A."/>
        </authorList>
    </citation>
    <scope>NUCLEOTIDE SEQUENCE [LARGE SCALE GENOMIC DNA]</scope>
</reference>
<proteinExistence type="inferred from homology"/>
<keyword id="KW-0687">Ribonucleoprotein</keyword>
<keyword id="KW-0689">Ribosomal protein</keyword>
<keyword id="KW-0694">RNA-binding</keyword>
<keyword id="KW-0699">rRNA-binding</keyword>
<keyword id="KW-0820">tRNA-binding</keyword>